<comment type="function">
    <text evidence="1">Plays a role in virus cell tropism, and may be required for efficient virus replication in macrophages.</text>
</comment>
<comment type="subcellular location">
    <subcellularLocation>
        <location evidence="3">Host membrane</location>
        <topology evidence="3">Multi-pass membrane protein</topology>
    </subcellularLocation>
</comment>
<comment type="similarity">
    <text evidence="3">Belongs to the asfivirus MGF 110 family.</text>
</comment>
<protein>
    <recommendedName>
        <fullName>Protein MGF 110-9L</fullName>
    </recommendedName>
</protein>
<accession>P0C9J0</accession>
<gene>
    <name type="ordered locus">Ken-019</name>
</gene>
<dbReference type="EMBL" id="AY261360">
    <property type="status" value="NOT_ANNOTATED_CDS"/>
    <property type="molecule type" value="Genomic_DNA"/>
</dbReference>
<dbReference type="Proteomes" id="UP000000861">
    <property type="component" value="Segment"/>
</dbReference>
<dbReference type="GO" id="GO:0033644">
    <property type="term" value="C:host cell membrane"/>
    <property type="evidence" value="ECO:0007669"/>
    <property type="project" value="UniProtKB-SubCell"/>
</dbReference>
<dbReference type="GO" id="GO:0016020">
    <property type="term" value="C:membrane"/>
    <property type="evidence" value="ECO:0007669"/>
    <property type="project" value="UniProtKB-KW"/>
</dbReference>
<dbReference type="InterPro" id="IPR004848">
    <property type="entry name" value="ASFV_fam_110"/>
</dbReference>
<dbReference type="Pfam" id="PF01639">
    <property type="entry name" value="v110"/>
    <property type="match status" value="2"/>
</dbReference>
<keyword id="KW-0325">Glycoprotein</keyword>
<keyword id="KW-1043">Host membrane</keyword>
<keyword id="KW-0472">Membrane</keyword>
<keyword id="KW-0812">Transmembrane</keyword>
<keyword id="KW-1133">Transmembrane helix</keyword>
<organismHost>
    <name type="scientific">Ornithodoros</name>
    <name type="common">relapsing fever ticks</name>
    <dbReference type="NCBI Taxonomy" id="6937"/>
</organismHost>
<organismHost>
    <name type="scientific">Phacochoerus aethiopicus</name>
    <name type="common">Warthog</name>
    <dbReference type="NCBI Taxonomy" id="85517"/>
</organismHost>
<organismHost>
    <name type="scientific">Phacochoerus africanus</name>
    <name type="common">Warthog</name>
    <dbReference type="NCBI Taxonomy" id="41426"/>
</organismHost>
<organismHost>
    <name type="scientific">Potamochoerus larvatus</name>
    <name type="common">Bushpig</name>
    <dbReference type="NCBI Taxonomy" id="273792"/>
</organismHost>
<organismHost>
    <name type="scientific">Sus scrofa</name>
    <name type="common">Pig</name>
    <dbReference type="NCBI Taxonomy" id="9823"/>
</organismHost>
<name>1109L_ASFK5</name>
<reference key="1">
    <citation type="submission" date="2003-03" db="EMBL/GenBank/DDBJ databases">
        <title>African swine fever virus genomes.</title>
        <authorList>
            <person name="Kutish G.F."/>
            <person name="Rock D.L."/>
        </authorList>
    </citation>
    <scope>NUCLEOTIDE SEQUENCE [LARGE SCALE GENOMIC DNA]</scope>
</reference>
<evidence type="ECO:0000250" key="1"/>
<evidence type="ECO:0000255" key="2"/>
<evidence type="ECO:0000305" key="3"/>
<organism>
    <name type="scientific">African swine fever virus (isolate Pig/Kenya/KEN-50/1950)</name>
    <name type="common">ASFV</name>
    <dbReference type="NCBI Taxonomy" id="561445"/>
    <lineage>
        <taxon>Viruses</taxon>
        <taxon>Varidnaviria</taxon>
        <taxon>Bamfordvirae</taxon>
        <taxon>Nucleocytoviricota</taxon>
        <taxon>Pokkesviricetes</taxon>
        <taxon>Asfuvirales</taxon>
        <taxon>Asfarviridae</taxon>
        <taxon>Asfivirus</taxon>
        <taxon>African swine fever virus</taxon>
    </lineage>
</organism>
<sequence>MKVIVFLLVLLEMQRVIQNQPFPGTGELPMTRRPPKRELEYWCTYARSCDFCWNCRHGVCKNKVFEKHPLIKKNDYIQICRVSRYGEKCSYFTDSKIRRFHIMSCTNPTYYDWFDELMQVKEDRIIDVENIKHTCLCMVATIALMVYIRKQYSRMRMQAATRLLIFLGIYLLLGILMTNIIMNLPLSTDNPMQMRRPPKEDLKFWCTYAKHCDFCWTCKDGMCKNKVFSDHPIITQNDYIVNCTVSRWHDRCMYEAHFRIHYQHNMNCSQPKDLEWFIELKRHVINQDDL</sequence>
<proteinExistence type="inferred from homology"/>
<feature type="chain" id="PRO_0000373212" description="Protein MGF 110-9L">
    <location>
        <begin position="1"/>
        <end position="290"/>
    </location>
</feature>
<feature type="transmembrane region" description="Helical" evidence="2">
    <location>
        <begin position="1"/>
        <end position="19"/>
    </location>
</feature>
<feature type="transmembrane region" description="Helical" evidence="2">
    <location>
        <begin position="128"/>
        <end position="148"/>
    </location>
</feature>
<feature type="transmembrane region" description="Helical" evidence="2">
    <location>
        <begin position="163"/>
        <end position="183"/>
    </location>
</feature>
<feature type="glycosylation site" description="N-linked (GlcNAc...) asparagine; by host" evidence="2">
    <location>
        <position position="242"/>
    </location>
</feature>
<feature type="glycosylation site" description="N-linked (GlcNAc...) asparagine; by host" evidence="2">
    <location>
        <position position="267"/>
    </location>
</feature>